<organism>
    <name type="scientific">Alkaliphilus oremlandii (strain OhILAs)</name>
    <name type="common">Clostridium oremlandii (strain OhILAs)</name>
    <dbReference type="NCBI Taxonomy" id="350688"/>
    <lineage>
        <taxon>Bacteria</taxon>
        <taxon>Bacillati</taxon>
        <taxon>Bacillota</taxon>
        <taxon>Clostridia</taxon>
        <taxon>Peptostreptococcales</taxon>
        <taxon>Natronincolaceae</taxon>
        <taxon>Alkaliphilus</taxon>
    </lineage>
</organism>
<keyword id="KW-0067">ATP-binding</keyword>
<keyword id="KW-0414">Isoprene biosynthesis</keyword>
<keyword id="KW-0418">Kinase</keyword>
<keyword id="KW-0547">Nucleotide-binding</keyword>
<keyword id="KW-1185">Reference proteome</keyword>
<keyword id="KW-0808">Transferase</keyword>
<name>ISPE_ALKOO</name>
<feature type="chain" id="PRO_1000092059" description="4-diphosphocytidyl-2-C-methyl-D-erythritol kinase">
    <location>
        <begin position="1"/>
        <end position="292"/>
    </location>
</feature>
<feature type="active site" evidence="1">
    <location>
        <position position="11"/>
    </location>
</feature>
<feature type="active site" evidence="1">
    <location>
        <position position="137"/>
    </location>
</feature>
<feature type="binding site" evidence="1">
    <location>
        <begin position="95"/>
        <end position="105"/>
    </location>
    <ligand>
        <name>ATP</name>
        <dbReference type="ChEBI" id="CHEBI:30616"/>
    </ligand>
</feature>
<accession>A8ML31</accession>
<dbReference type="EC" id="2.7.1.148" evidence="1"/>
<dbReference type="EMBL" id="CP000853">
    <property type="protein sequence ID" value="ABW17848.1"/>
    <property type="molecule type" value="Genomic_DNA"/>
</dbReference>
<dbReference type="RefSeq" id="WP_012158163.1">
    <property type="nucleotide sequence ID" value="NC_009922.1"/>
</dbReference>
<dbReference type="SMR" id="A8ML31"/>
<dbReference type="STRING" id="350688.Clos_0285"/>
<dbReference type="KEGG" id="aoe:Clos_0285"/>
<dbReference type="eggNOG" id="COG1947">
    <property type="taxonomic scope" value="Bacteria"/>
</dbReference>
<dbReference type="HOGENOM" id="CLU_053057_1_1_9"/>
<dbReference type="OrthoDB" id="9809438at2"/>
<dbReference type="UniPathway" id="UPA00056">
    <property type="reaction ID" value="UER00094"/>
</dbReference>
<dbReference type="Proteomes" id="UP000000269">
    <property type="component" value="Chromosome"/>
</dbReference>
<dbReference type="GO" id="GO:0050515">
    <property type="term" value="F:4-(cytidine 5'-diphospho)-2-C-methyl-D-erythritol kinase activity"/>
    <property type="evidence" value="ECO:0007669"/>
    <property type="project" value="UniProtKB-UniRule"/>
</dbReference>
<dbReference type="GO" id="GO:0005524">
    <property type="term" value="F:ATP binding"/>
    <property type="evidence" value="ECO:0007669"/>
    <property type="project" value="UniProtKB-UniRule"/>
</dbReference>
<dbReference type="GO" id="GO:0019288">
    <property type="term" value="P:isopentenyl diphosphate biosynthetic process, methylerythritol 4-phosphate pathway"/>
    <property type="evidence" value="ECO:0007669"/>
    <property type="project" value="UniProtKB-UniRule"/>
</dbReference>
<dbReference type="GO" id="GO:0016114">
    <property type="term" value="P:terpenoid biosynthetic process"/>
    <property type="evidence" value="ECO:0007669"/>
    <property type="project" value="InterPro"/>
</dbReference>
<dbReference type="Gene3D" id="3.30.230.10">
    <property type="match status" value="1"/>
</dbReference>
<dbReference type="Gene3D" id="3.30.70.890">
    <property type="entry name" value="GHMP kinase, C-terminal domain"/>
    <property type="match status" value="1"/>
</dbReference>
<dbReference type="HAMAP" id="MF_00061">
    <property type="entry name" value="IspE"/>
    <property type="match status" value="1"/>
</dbReference>
<dbReference type="InterPro" id="IPR013750">
    <property type="entry name" value="GHMP_kinase_C_dom"/>
</dbReference>
<dbReference type="InterPro" id="IPR036554">
    <property type="entry name" value="GHMP_kinase_C_sf"/>
</dbReference>
<dbReference type="InterPro" id="IPR006204">
    <property type="entry name" value="GHMP_kinase_N_dom"/>
</dbReference>
<dbReference type="InterPro" id="IPR004424">
    <property type="entry name" value="IspE"/>
</dbReference>
<dbReference type="InterPro" id="IPR020568">
    <property type="entry name" value="Ribosomal_Su5_D2-typ_SF"/>
</dbReference>
<dbReference type="InterPro" id="IPR014721">
    <property type="entry name" value="Ribsml_uS5_D2-typ_fold_subgr"/>
</dbReference>
<dbReference type="NCBIfam" id="TIGR00154">
    <property type="entry name" value="ispE"/>
    <property type="match status" value="1"/>
</dbReference>
<dbReference type="PANTHER" id="PTHR43527">
    <property type="entry name" value="4-DIPHOSPHOCYTIDYL-2-C-METHYL-D-ERYTHRITOL KINASE, CHLOROPLASTIC"/>
    <property type="match status" value="1"/>
</dbReference>
<dbReference type="PANTHER" id="PTHR43527:SF2">
    <property type="entry name" value="4-DIPHOSPHOCYTIDYL-2-C-METHYL-D-ERYTHRITOL KINASE, CHLOROPLASTIC"/>
    <property type="match status" value="1"/>
</dbReference>
<dbReference type="Pfam" id="PF08544">
    <property type="entry name" value="GHMP_kinases_C"/>
    <property type="match status" value="1"/>
</dbReference>
<dbReference type="Pfam" id="PF00288">
    <property type="entry name" value="GHMP_kinases_N"/>
    <property type="match status" value="1"/>
</dbReference>
<dbReference type="PIRSF" id="PIRSF010376">
    <property type="entry name" value="IspE"/>
    <property type="match status" value="1"/>
</dbReference>
<dbReference type="SUPFAM" id="SSF55060">
    <property type="entry name" value="GHMP Kinase, C-terminal domain"/>
    <property type="match status" value="1"/>
</dbReference>
<dbReference type="SUPFAM" id="SSF54211">
    <property type="entry name" value="Ribosomal protein S5 domain 2-like"/>
    <property type="match status" value="1"/>
</dbReference>
<protein>
    <recommendedName>
        <fullName evidence="1">4-diphosphocytidyl-2-C-methyl-D-erythritol kinase</fullName>
        <shortName evidence="1">CMK</shortName>
        <ecNumber evidence="1">2.7.1.148</ecNumber>
    </recommendedName>
    <alternativeName>
        <fullName evidence="1">4-(cytidine-5'-diphospho)-2-C-methyl-D-erythritol kinase</fullName>
    </alternativeName>
</protein>
<reference key="1">
    <citation type="submission" date="2007-10" db="EMBL/GenBank/DDBJ databases">
        <title>Complete genome of Alkaliphilus oremlandii OhILAs.</title>
        <authorList>
            <person name="Copeland A."/>
            <person name="Lucas S."/>
            <person name="Lapidus A."/>
            <person name="Barry K."/>
            <person name="Detter J.C."/>
            <person name="Glavina del Rio T."/>
            <person name="Hammon N."/>
            <person name="Israni S."/>
            <person name="Dalin E."/>
            <person name="Tice H."/>
            <person name="Pitluck S."/>
            <person name="Chain P."/>
            <person name="Malfatti S."/>
            <person name="Shin M."/>
            <person name="Vergez L."/>
            <person name="Schmutz J."/>
            <person name="Larimer F."/>
            <person name="Land M."/>
            <person name="Hauser L."/>
            <person name="Kyrpides N."/>
            <person name="Mikhailova N."/>
            <person name="Stolz J.F."/>
            <person name="Dawson A."/>
            <person name="Fisher E."/>
            <person name="Crable B."/>
            <person name="Perera E."/>
            <person name="Lisak J."/>
            <person name="Ranganathan M."/>
            <person name="Basu P."/>
            <person name="Richardson P."/>
        </authorList>
    </citation>
    <scope>NUCLEOTIDE SEQUENCE [LARGE SCALE GENOMIC DNA]</scope>
    <source>
        <strain>OhILAs</strain>
    </source>
</reference>
<comment type="function">
    <text evidence="1">Catalyzes the phosphorylation of the position 2 hydroxy group of 4-diphosphocytidyl-2C-methyl-D-erythritol.</text>
</comment>
<comment type="catalytic activity">
    <reaction evidence="1">
        <text>4-CDP-2-C-methyl-D-erythritol + ATP = 4-CDP-2-C-methyl-D-erythritol 2-phosphate + ADP + H(+)</text>
        <dbReference type="Rhea" id="RHEA:18437"/>
        <dbReference type="ChEBI" id="CHEBI:15378"/>
        <dbReference type="ChEBI" id="CHEBI:30616"/>
        <dbReference type="ChEBI" id="CHEBI:57823"/>
        <dbReference type="ChEBI" id="CHEBI:57919"/>
        <dbReference type="ChEBI" id="CHEBI:456216"/>
        <dbReference type="EC" id="2.7.1.148"/>
    </reaction>
</comment>
<comment type="pathway">
    <text evidence="1">Isoprenoid biosynthesis; isopentenyl diphosphate biosynthesis via DXP pathway; isopentenyl diphosphate from 1-deoxy-D-xylulose 5-phosphate: step 3/6.</text>
</comment>
<comment type="similarity">
    <text evidence="1">Belongs to the GHMP kinase family. IspE subfamily.</text>
</comment>
<sequence>MKQIYLKSRAKINLSLDVRRKREDGYHEVEMIMQQIDLYDNILIRERMDSEIVLSTNCIFIPTTSSNIAYKAAHKLKQRLDITRGIDIFIDKQIPVSAGLAGGSSNAAAVLMGLNHLWSLGLSTKELMEIGVTIGADVPFCLLGGTALAEGIGEVLTPINSDIKNTWIVLVKPAISVSTGDVYGSLDLSKIVDRPPTAQLLEAIKEGNIYDVSSKMCNVLETVTVNKYPIITEIKKKMMEYNALGAMMSGSGPTVFGIFKSYERAKSAYEHLSLFYKQSYMVQTYNGGTEIG</sequence>
<evidence type="ECO:0000255" key="1">
    <source>
        <dbReference type="HAMAP-Rule" id="MF_00061"/>
    </source>
</evidence>
<proteinExistence type="inferred from homology"/>
<gene>
    <name evidence="1" type="primary">ispE</name>
    <name type="ordered locus">Clos_0285</name>
</gene>